<organism>
    <name type="scientific">Magnetococcus marinus (strain ATCC BAA-1437 / JCM 17883 / MC-1)</name>
    <dbReference type="NCBI Taxonomy" id="156889"/>
    <lineage>
        <taxon>Bacteria</taxon>
        <taxon>Pseudomonadati</taxon>
        <taxon>Pseudomonadota</taxon>
        <taxon>Alphaproteobacteria</taxon>
        <taxon>Magnetococcales</taxon>
        <taxon>Magnetococcaceae</taxon>
        <taxon>Magnetococcus</taxon>
    </lineage>
</organism>
<sequence>MFNLSLHGDPYPQQPGHLQLSWLDRMGERVRLAWMRHKQVNGWVLGRMAKRVLKAQTERESMTPEALREDLQRLTLALRRDGLEDALVEQAFAHVRLTAQRVLGMAHFPVQLKGGYIMLMGYLAEMDTGEGKTLTATLPAATAALAGFTVHVVTVNEYLARRDAQLMTPLYRALGVTTGVVTESMDSDEKQLGYRANVVYCTSKTLVFDYLRDRIQLGERMKPMAMAFDALVGGGRGQVMLQGLQYAIVDEADSIFVDEARTPLIISAPSKDASELAFLHTAWSLSQQLQQGQDYTLSGEEPPRITEAGSAQLAQLCVDLPPVWQGQHRREEAVAQALTAQHSFDRDVHYIIRDDKVMVVDETTGRVMPDRAWERGLQQLIEIKEGVAVTPPKETLAKISFQLFFRRFLRLSGMSGTCREVGGEIAEVYGLGVVRVAPNRPSKRKNLPIALYAWRAQADAAVVQAVRRCHMLGQPVLVGTRSIAASELLSQSFSEAGLPHRVLNAKQDQEENTIIAEAGYKGGITIATNMAGRGTDIKLSKEVQACGGLHVILTERHDNRRVDRQLAGRCARQGDPGSWQEILSLEDELTQKFLPLLGRTLRAWLALMPHFFLARWLGMVYYRWAQSYADRGHRRVRRQLMKTDFQLRQSLSFTGEME</sequence>
<evidence type="ECO:0000255" key="1">
    <source>
        <dbReference type="HAMAP-Rule" id="MF_01382"/>
    </source>
</evidence>
<proteinExistence type="inferred from homology"/>
<protein>
    <recommendedName>
        <fullName evidence="1">Protein translocase subunit SecA 3</fullName>
        <ecNumber evidence="1">7.4.2.8</ecNumber>
    </recommendedName>
</protein>
<accession>A0L9N3</accession>
<comment type="function">
    <text evidence="1">Part of the Sec protein translocase complex. Interacts with the SecYEG preprotein conducting channel. Has a central role in coupling the hydrolysis of ATP to the transfer of proteins into and across the cell membrane, serving both as a receptor for the preprotein-SecB complex and as an ATP-driven molecular motor driving the stepwise translocation of polypeptide chains across the membrane.</text>
</comment>
<comment type="catalytic activity">
    <reaction evidence="1">
        <text>ATP + H2O + cellular proteinSide 1 = ADP + phosphate + cellular proteinSide 2.</text>
        <dbReference type="EC" id="7.4.2.8"/>
    </reaction>
</comment>
<comment type="subunit">
    <text evidence="1">Monomer and homodimer. Part of the essential Sec protein translocation apparatus which comprises SecA, SecYEG and auxiliary proteins SecDF-YajC and YidC.</text>
</comment>
<comment type="subcellular location">
    <subcellularLocation>
        <location evidence="1">Cell inner membrane</location>
        <topology evidence="1">Peripheral membrane protein</topology>
        <orientation evidence="1">Cytoplasmic side</orientation>
    </subcellularLocation>
    <subcellularLocation>
        <location evidence="1">Cytoplasm</location>
    </subcellularLocation>
    <text evidence="1">Distribution is 50-50.</text>
</comment>
<comment type="similarity">
    <text evidence="1">Belongs to the SecA family.</text>
</comment>
<reference key="1">
    <citation type="journal article" date="2009" name="Appl. Environ. Microbiol.">
        <title>Complete genome sequence of the chemolithoautotrophic marine magnetotactic coccus strain MC-1.</title>
        <authorList>
            <person name="Schubbe S."/>
            <person name="Williams T.J."/>
            <person name="Xie G."/>
            <person name="Kiss H.E."/>
            <person name="Brettin T.S."/>
            <person name="Martinez D."/>
            <person name="Ross C.A."/>
            <person name="Schuler D."/>
            <person name="Cox B.L."/>
            <person name="Nealson K.H."/>
            <person name="Bazylinski D.A."/>
        </authorList>
    </citation>
    <scope>NUCLEOTIDE SEQUENCE [LARGE SCALE GENOMIC DNA]</scope>
    <source>
        <strain>ATCC BAA-1437 / JCM 17883 / MC-1</strain>
    </source>
</reference>
<name>SECA3_MAGMM</name>
<keyword id="KW-0067">ATP-binding</keyword>
<keyword id="KW-0997">Cell inner membrane</keyword>
<keyword id="KW-1003">Cell membrane</keyword>
<keyword id="KW-0963">Cytoplasm</keyword>
<keyword id="KW-0472">Membrane</keyword>
<keyword id="KW-0547">Nucleotide-binding</keyword>
<keyword id="KW-0653">Protein transport</keyword>
<keyword id="KW-1185">Reference proteome</keyword>
<keyword id="KW-1278">Translocase</keyword>
<keyword id="KW-0811">Translocation</keyword>
<keyword id="KW-0813">Transport</keyword>
<dbReference type="EC" id="7.4.2.8" evidence="1"/>
<dbReference type="EMBL" id="CP000471">
    <property type="protein sequence ID" value="ABK44676.1"/>
    <property type="molecule type" value="Genomic_DNA"/>
</dbReference>
<dbReference type="RefSeq" id="WP_011713804.1">
    <property type="nucleotide sequence ID" value="NC_008576.1"/>
</dbReference>
<dbReference type="SMR" id="A0L9N3"/>
<dbReference type="STRING" id="156889.Mmc1_2175"/>
<dbReference type="KEGG" id="mgm:Mmc1_2175"/>
<dbReference type="eggNOG" id="COG0653">
    <property type="taxonomic scope" value="Bacteria"/>
</dbReference>
<dbReference type="HOGENOM" id="CLU_005314_3_2_5"/>
<dbReference type="OrthoDB" id="9805579at2"/>
<dbReference type="Proteomes" id="UP000002586">
    <property type="component" value="Chromosome"/>
</dbReference>
<dbReference type="GO" id="GO:0031522">
    <property type="term" value="C:cell envelope Sec protein transport complex"/>
    <property type="evidence" value="ECO:0007669"/>
    <property type="project" value="TreeGrafter"/>
</dbReference>
<dbReference type="GO" id="GO:0005829">
    <property type="term" value="C:cytosol"/>
    <property type="evidence" value="ECO:0007669"/>
    <property type="project" value="TreeGrafter"/>
</dbReference>
<dbReference type="GO" id="GO:0005886">
    <property type="term" value="C:plasma membrane"/>
    <property type="evidence" value="ECO:0007669"/>
    <property type="project" value="UniProtKB-SubCell"/>
</dbReference>
<dbReference type="GO" id="GO:0005524">
    <property type="term" value="F:ATP binding"/>
    <property type="evidence" value="ECO:0007669"/>
    <property type="project" value="UniProtKB-UniRule"/>
</dbReference>
<dbReference type="GO" id="GO:0008564">
    <property type="term" value="F:protein-exporting ATPase activity"/>
    <property type="evidence" value="ECO:0007669"/>
    <property type="project" value="UniProtKB-EC"/>
</dbReference>
<dbReference type="GO" id="GO:0065002">
    <property type="term" value="P:intracellular protein transmembrane transport"/>
    <property type="evidence" value="ECO:0007669"/>
    <property type="project" value="UniProtKB-UniRule"/>
</dbReference>
<dbReference type="GO" id="GO:0017038">
    <property type="term" value="P:protein import"/>
    <property type="evidence" value="ECO:0007669"/>
    <property type="project" value="InterPro"/>
</dbReference>
<dbReference type="GO" id="GO:0006605">
    <property type="term" value="P:protein targeting"/>
    <property type="evidence" value="ECO:0007669"/>
    <property type="project" value="UniProtKB-UniRule"/>
</dbReference>
<dbReference type="GO" id="GO:0043952">
    <property type="term" value="P:protein transport by the Sec complex"/>
    <property type="evidence" value="ECO:0007669"/>
    <property type="project" value="TreeGrafter"/>
</dbReference>
<dbReference type="CDD" id="cd17928">
    <property type="entry name" value="DEXDc_SecA"/>
    <property type="match status" value="1"/>
</dbReference>
<dbReference type="CDD" id="cd18803">
    <property type="entry name" value="SF2_C_secA"/>
    <property type="match status" value="1"/>
</dbReference>
<dbReference type="FunFam" id="3.40.50.300:FF:000429">
    <property type="entry name" value="Preprotein translocase subunit SecA"/>
    <property type="match status" value="1"/>
</dbReference>
<dbReference type="Gene3D" id="3.40.50.300">
    <property type="entry name" value="P-loop containing nucleotide triphosphate hydrolases"/>
    <property type="match status" value="2"/>
</dbReference>
<dbReference type="Gene3D" id="3.90.1440.10">
    <property type="entry name" value="SecA, preprotein cross-linking domain"/>
    <property type="match status" value="1"/>
</dbReference>
<dbReference type="HAMAP" id="MF_01382">
    <property type="entry name" value="SecA"/>
    <property type="match status" value="1"/>
</dbReference>
<dbReference type="InterPro" id="IPR014001">
    <property type="entry name" value="Helicase_ATP-bd"/>
</dbReference>
<dbReference type="InterPro" id="IPR001650">
    <property type="entry name" value="Helicase_C-like"/>
</dbReference>
<dbReference type="InterPro" id="IPR027417">
    <property type="entry name" value="P-loop_NTPase"/>
</dbReference>
<dbReference type="InterPro" id="IPR000185">
    <property type="entry name" value="SecA"/>
</dbReference>
<dbReference type="InterPro" id="IPR020937">
    <property type="entry name" value="SecA_CS"/>
</dbReference>
<dbReference type="InterPro" id="IPR011115">
    <property type="entry name" value="SecA_DEAD"/>
</dbReference>
<dbReference type="InterPro" id="IPR014018">
    <property type="entry name" value="SecA_motor_DEAD"/>
</dbReference>
<dbReference type="InterPro" id="IPR011130">
    <property type="entry name" value="SecA_preprotein_X-link_dom"/>
</dbReference>
<dbReference type="InterPro" id="IPR044722">
    <property type="entry name" value="SecA_SF2_C"/>
</dbReference>
<dbReference type="InterPro" id="IPR036670">
    <property type="entry name" value="SecA_X-link_sf"/>
</dbReference>
<dbReference type="PANTHER" id="PTHR30612:SF0">
    <property type="entry name" value="CHLOROPLAST PROTEIN-TRANSPORTING ATPASE"/>
    <property type="match status" value="1"/>
</dbReference>
<dbReference type="PANTHER" id="PTHR30612">
    <property type="entry name" value="SECA INNER MEMBRANE COMPONENT OF SEC PROTEIN SECRETION SYSTEM"/>
    <property type="match status" value="1"/>
</dbReference>
<dbReference type="Pfam" id="PF21090">
    <property type="entry name" value="P-loop_SecA"/>
    <property type="match status" value="1"/>
</dbReference>
<dbReference type="Pfam" id="PF07517">
    <property type="entry name" value="SecA_DEAD"/>
    <property type="match status" value="1"/>
</dbReference>
<dbReference type="Pfam" id="PF01043">
    <property type="entry name" value="SecA_PP_bind"/>
    <property type="match status" value="1"/>
</dbReference>
<dbReference type="PRINTS" id="PR00906">
    <property type="entry name" value="SECA"/>
</dbReference>
<dbReference type="SMART" id="SM00957">
    <property type="entry name" value="SecA_DEAD"/>
    <property type="match status" value="1"/>
</dbReference>
<dbReference type="SMART" id="SM00958">
    <property type="entry name" value="SecA_PP_bind"/>
    <property type="match status" value="1"/>
</dbReference>
<dbReference type="SUPFAM" id="SSF52540">
    <property type="entry name" value="P-loop containing nucleoside triphosphate hydrolases"/>
    <property type="match status" value="2"/>
</dbReference>
<dbReference type="SUPFAM" id="SSF81767">
    <property type="entry name" value="Pre-protein crosslinking domain of SecA"/>
    <property type="match status" value="1"/>
</dbReference>
<dbReference type="PROSITE" id="PS01312">
    <property type="entry name" value="SECA"/>
    <property type="match status" value="1"/>
</dbReference>
<dbReference type="PROSITE" id="PS51196">
    <property type="entry name" value="SECA_MOTOR_DEAD"/>
    <property type="match status" value="1"/>
</dbReference>
<feature type="chain" id="PRO_0000318373" description="Protein translocase subunit SecA 3">
    <location>
        <begin position="1"/>
        <end position="658"/>
    </location>
</feature>
<feature type="binding site" evidence="1">
    <location>
        <position position="111"/>
    </location>
    <ligand>
        <name>ATP</name>
        <dbReference type="ChEBI" id="CHEBI:30616"/>
    </ligand>
</feature>
<feature type="binding site" evidence="1">
    <location>
        <begin position="129"/>
        <end position="133"/>
    </location>
    <ligand>
        <name>ATP</name>
        <dbReference type="ChEBI" id="CHEBI:30616"/>
    </ligand>
</feature>
<feature type="binding site" evidence="1">
    <location>
        <position position="536"/>
    </location>
    <ligand>
        <name>ATP</name>
        <dbReference type="ChEBI" id="CHEBI:30616"/>
    </ligand>
</feature>
<gene>
    <name evidence="1" type="primary">secA3</name>
    <name type="ordered locus">Mmc1_2175</name>
</gene>